<comment type="function">
    <text evidence="1">May protect the nitrogenase Fe-Mo protein from oxidative damage.</text>
</comment>
<comment type="subunit">
    <text evidence="1">Homotrimer; associates with NifD.</text>
</comment>
<comment type="similarity">
    <text evidence="1">Belongs to the NifW family.</text>
</comment>
<protein>
    <recommendedName>
        <fullName evidence="1">Nitrogenase-stabilizing/protective protein NifW</fullName>
    </recommendedName>
</protein>
<name>NIFW_LEPCP</name>
<gene>
    <name evidence="1" type="primary">nifW</name>
    <name type="ordered locus">Lcho_1367</name>
</gene>
<organism>
    <name type="scientific">Leptothrix cholodnii (strain ATCC 51168 / LMG 8142 / SP-6)</name>
    <name type="common">Leptothrix discophora (strain SP-6)</name>
    <dbReference type="NCBI Taxonomy" id="395495"/>
    <lineage>
        <taxon>Bacteria</taxon>
        <taxon>Pseudomonadati</taxon>
        <taxon>Pseudomonadota</taxon>
        <taxon>Betaproteobacteria</taxon>
        <taxon>Burkholderiales</taxon>
        <taxon>Sphaerotilaceae</taxon>
        <taxon>Leptothrix</taxon>
    </lineage>
</organism>
<proteinExistence type="inferred from homology"/>
<accession>B1Y708</accession>
<feature type="chain" id="PRO_1000127809" description="Nitrogenase-stabilizing/protective protein NifW">
    <location>
        <begin position="1"/>
        <end position="121"/>
    </location>
</feature>
<evidence type="ECO:0000255" key="1">
    <source>
        <dbReference type="HAMAP-Rule" id="MF_00529"/>
    </source>
</evidence>
<sequence>MDDLTTRLKALSSANEFLEFFGIAYEERVVHVNRLHILKRFYQYLHRAEGLAGLDDVEMFRRYRELLAQAYQDFTTSTAVKEKVFKVFQDADGQGHVSVTSLRDSLAERRKSAGGPELRAA</sequence>
<keyword id="KW-0535">Nitrogen fixation</keyword>
<keyword id="KW-1185">Reference proteome</keyword>
<reference key="1">
    <citation type="submission" date="2008-03" db="EMBL/GenBank/DDBJ databases">
        <title>Complete sequence of Leptothrix cholodnii SP-6.</title>
        <authorList>
            <consortium name="US DOE Joint Genome Institute"/>
            <person name="Copeland A."/>
            <person name="Lucas S."/>
            <person name="Lapidus A."/>
            <person name="Glavina del Rio T."/>
            <person name="Dalin E."/>
            <person name="Tice H."/>
            <person name="Bruce D."/>
            <person name="Goodwin L."/>
            <person name="Pitluck S."/>
            <person name="Chertkov O."/>
            <person name="Brettin T."/>
            <person name="Detter J.C."/>
            <person name="Han C."/>
            <person name="Kuske C.R."/>
            <person name="Schmutz J."/>
            <person name="Larimer F."/>
            <person name="Land M."/>
            <person name="Hauser L."/>
            <person name="Kyrpides N."/>
            <person name="Lykidis A."/>
            <person name="Emerson D."/>
            <person name="Richardson P."/>
        </authorList>
    </citation>
    <scope>NUCLEOTIDE SEQUENCE [LARGE SCALE GENOMIC DNA]</scope>
    <source>
        <strain>ATCC 51168 / LMG 8142 / SP-6</strain>
    </source>
</reference>
<dbReference type="EMBL" id="CP001013">
    <property type="protein sequence ID" value="ACB33635.1"/>
    <property type="molecule type" value="Genomic_DNA"/>
</dbReference>
<dbReference type="RefSeq" id="WP_012346397.1">
    <property type="nucleotide sequence ID" value="NC_010524.1"/>
</dbReference>
<dbReference type="STRING" id="395495.Lcho_1367"/>
<dbReference type="KEGG" id="lch:Lcho_1367"/>
<dbReference type="eggNOG" id="ENOG50330W8">
    <property type="taxonomic scope" value="Bacteria"/>
</dbReference>
<dbReference type="HOGENOM" id="CLU_145318_1_0_4"/>
<dbReference type="OrthoDB" id="9811868at2"/>
<dbReference type="Proteomes" id="UP000001693">
    <property type="component" value="Chromosome"/>
</dbReference>
<dbReference type="GO" id="GO:0009399">
    <property type="term" value="P:nitrogen fixation"/>
    <property type="evidence" value="ECO:0007669"/>
    <property type="project" value="UniProtKB-UniRule"/>
</dbReference>
<dbReference type="HAMAP" id="MF_00529">
    <property type="entry name" value="NifW"/>
    <property type="match status" value="1"/>
</dbReference>
<dbReference type="InterPro" id="IPR004893">
    <property type="entry name" value="NifW"/>
</dbReference>
<dbReference type="NCBIfam" id="NF002009">
    <property type="entry name" value="PRK00810.1"/>
    <property type="match status" value="1"/>
</dbReference>
<dbReference type="Pfam" id="PF03206">
    <property type="entry name" value="NifW"/>
    <property type="match status" value="1"/>
</dbReference>
<dbReference type="PIRSF" id="PIRSF005790">
    <property type="entry name" value="NifW"/>
    <property type="match status" value="1"/>
</dbReference>